<reference key="1">
    <citation type="journal article" date="2007" name="J. Bacteriol.">
        <title>The complete genome sequence of the lactic acid bacterial paradigm Lactococcus lactis subsp. cremoris MG1363.</title>
        <authorList>
            <person name="Wegmann U."/>
            <person name="O'Connell-Motherway M."/>
            <person name="Zomer A."/>
            <person name="Buist G."/>
            <person name="Shearman C."/>
            <person name="Canchaya C."/>
            <person name="Ventura M."/>
            <person name="Goesmann A."/>
            <person name="Gasson M.J."/>
            <person name="Kuipers O.P."/>
            <person name="van Sinderen D."/>
            <person name="Kok J."/>
        </authorList>
    </citation>
    <scope>NUCLEOTIDE SEQUENCE [LARGE SCALE GENOMIC DNA]</scope>
    <source>
        <strain>MG1363</strain>
    </source>
</reference>
<dbReference type="EC" id="3.6.-.-" evidence="1"/>
<dbReference type="EMBL" id="AM406671">
    <property type="protein sequence ID" value="CAL99083.1"/>
    <property type="molecule type" value="Genomic_DNA"/>
</dbReference>
<dbReference type="RefSeq" id="WP_011836141.1">
    <property type="nucleotide sequence ID" value="NC_009004.1"/>
</dbReference>
<dbReference type="SMR" id="A2RP37"/>
<dbReference type="STRING" id="416870.llmg_2521"/>
<dbReference type="KEGG" id="llm:llmg_2521"/>
<dbReference type="eggNOG" id="COG0486">
    <property type="taxonomic scope" value="Bacteria"/>
</dbReference>
<dbReference type="HOGENOM" id="CLU_019624_4_1_9"/>
<dbReference type="OrthoDB" id="9805918at2"/>
<dbReference type="PhylomeDB" id="A2RP37"/>
<dbReference type="Proteomes" id="UP000000364">
    <property type="component" value="Chromosome"/>
</dbReference>
<dbReference type="GO" id="GO:0005829">
    <property type="term" value="C:cytosol"/>
    <property type="evidence" value="ECO:0007669"/>
    <property type="project" value="TreeGrafter"/>
</dbReference>
<dbReference type="GO" id="GO:0005525">
    <property type="term" value="F:GTP binding"/>
    <property type="evidence" value="ECO:0007669"/>
    <property type="project" value="UniProtKB-UniRule"/>
</dbReference>
<dbReference type="GO" id="GO:0003924">
    <property type="term" value="F:GTPase activity"/>
    <property type="evidence" value="ECO:0007669"/>
    <property type="project" value="UniProtKB-UniRule"/>
</dbReference>
<dbReference type="GO" id="GO:0046872">
    <property type="term" value="F:metal ion binding"/>
    <property type="evidence" value="ECO:0007669"/>
    <property type="project" value="UniProtKB-KW"/>
</dbReference>
<dbReference type="GO" id="GO:0030488">
    <property type="term" value="P:tRNA methylation"/>
    <property type="evidence" value="ECO:0007669"/>
    <property type="project" value="TreeGrafter"/>
</dbReference>
<dbReference type="GO" id="GO:0002098">
    <property type="term" value="P:tRNA wobble uridine modification"/>
    <property type="evidence" value="ECO:0007669"/>
    <property type="project" value="TreeGrafter"/>
</dbReference>
<dbReference type="CDD" id="cd04164">
    <property type="entry name" value="trmE"/>
    <property type="match status" value="1"/>
</dbReference>
<dbReference type="CDD" id="cd14858">
    <property type="entry name" value="TrmE_N"/>
    <property type="match status" value="1"/>
</dbReference>
<dbReference type="FunFam" id="3.30.1360.120:FF:000003">
    <property type="entry name" value="tRNA modification GTPase MnmE"/>
    <property type="match status" value="1"/>
</dbReference>
<dbReference type="FunFam" id="3.40.50.300:FF:000494">
    <property type="entry name" value="tRNA modification GTPase MnmE"/>
    <property type="match status" value="1"/>
</dbReference>
<dbReference type="Gene3D" id="3.40.50.300">
    <property type="entry name" value="P-loop containing nucleotide triphosphate hydrolases"/>
    <property type="match status" value="1"/>
</dbReference>
<dbReference type="Gene3D" id="3.30.1360.120">
    <property type="entry name" value="Probable tRNA modification gtpase trme, domain 1"/>
    <property type="match status" value="1"/>
</dbReference>
<dbReference type="Gene3D" id="1.20.120.430">
    <property type="entry name" value="tRNA modification GTPase MnmE domain 2"/>
    <property type="match status" value="1"/>
</dbReference>
<dbReference type="HAMAP" id="MF_00379">
    <property type="entry name" value="GTPase_MnmE"/>
    <property type="match status" value="1"/>
</dbReference>
<dbReference type="InterPro" id="IPR031168">
    <property type="entry name" value="G_TrmE"/>
</dbReference>
<dbReference type="InterPro" id="IPR006073">
    <property type="entry name" value="GTP-bd"/>
</dbReference>
<dbReference type="InterPro" id="IPR018948">
    <property type="entry name" value="GTP-bd_TrmE_N"/>
</dbReference>
<dbReference type="InterPro" id="IPR004520">
    <property type="entry name" value="GTPase_MnmE"/>
</dbReference>
<dbReference type="InterPro" id="IPR027368">
    <property type="entry name" value="MnmE_dom2"/>
</dbReference>
<dbReference type="InterPro" id="IPR025867">
    <property type="entry name" value="MnmE_helical"/>
</dbReference>
<dbReference type="InterPro" id="IPR027417">
    <property type="entry name" value="P-loop_NTPase"/>
</dbReference>
<dbReference type="InterPro" id="IPR005225">
    <property type="entry name" value="Small_GTP-bd"/>
</dbReference>
<dbReference type="InterPro" id="IPR027266">
    <property type="entry name" value="TrmE/GcvT_dom1"/>
</dbReference>
<dbReference type="NCBIfam" id="TIGR00450">
    <property type="entry name" value="mnmE_trmE_thdF"/>
    <property type="match status" value="1"/>
</dbReference>
<dbReference type="NCBIfam" id="NF003661">
    <property type="entry name" value="PRK05291.1-3"/>
    <property type="match status" value="1"/>
</dbReference>
<dbReference type="NCBIfam" id="TIGR00231">
    <property type="entry name" value="small_GTP"/>
    <property type="match status" value="1"/>
</dbReference>
<dbReference type="PANTHER" id="PTHR42714">
    <property type="entry name" value="TRNA MODIFICATION GTPASE GTPBP3"/>
    <property type="match status" value="1"/>
</dbReference>
<dbReference type="PANTHER" id="PTHR42714:SF2">
    <property type="entry name" value="TRNA MODIFICATION GTPASE GTPBP3, MITOCHONDRIAL"/>
    <property type="match status" value="1"/>
</dbReference>
<dbReference type="Pfam" id="PF01926">
    <property type="entry name" value="MMR_HSR1"/>
    <property type="match status" value="1"/>
</dbReference>
<dbReference type="Pfam" id="PF12631">
    <property type="entry name" value="MnmE_helical"/>
    <property type="match status" value="1"/>
</dbReference>
<dbReference type="Pfam" id="PF10396">
    <property type="entry name" value="TrmE_N"/>
    <property type="match status" value="1"/>
</dbReference>
<dbReference type="SUPFAM" id="SSF52540">
    <property type="entry name" value="P-loop containing nucleoside triphosphate hydrolases"/>
    <property type="match status" value="1"/>
</dbReference>
<dbReference type="SUPFAM" id="SSF116878">
    <property type="entry name" value="TrmE connector domain"/>
    <property type="match status" value="1"/>
</dbReference>
<dbReference type="PROSITE" id="PS51709">
    <property type="entry name" value="G_TRME"/>
    <property type="match status" value="1"/>
</dbReference>
<gene>
    <name evidence="1" type="primary">mnmE</name>
    <name evidence="1" type="synonym">trmE</name>
    <name type="ordered locus">llmg_2521</name>
</gene>
<feature type="chain" id="PRO_0000345813" description="tRNA modification GTPase MnmE">
    <location>
        <begin position="1"/>
        <end position="455"/>
    </location>
</feature>
<feature type="domain" description="TrmE-type G">
    <location>
        <begin position="222"/>
        <end position="376"/>
    </location>
</feature>
<feature type="binding site" evidence="1">
    <location>
        <position position="26"/>
    </location>
    <ligand>
        <name>(6S)-5-formyl-5,6,7,8-tetrahydrofolate</name>
        <dbReference type="ChEBI" id="CHEBI:57457"/>
    </ligand>
</feature>
<feature type="binding site" evidence="1">
    <location>
        <position position="86"/>
    </location>
    <ligand>
        <name>(6S)-5-formyl-5,6,7,8-tetrahydrofolate</name>
        <dbReference type="ChEBI" id="CHEBI:57457"/>
    </ligand>
</feature>
<feature type="binding site" evidence="1">
    <location>
        <position position="125"/>
    </location>
    <ligand>
        <name>(6S)-5-formyl-5,6,7,8-tetrahydrofolate</name>
        <dbReference type="ChEBI" id="CHEBI:57457"/>
    </ligand>
</feature>
<feature type="binding site" evidence="1">
    <location>
        <begin position="232"/>
        <end position="237"/>
    </location>
    <ligand>
        <name>GTP</name>
        <dbReference type="ChEBI" id="CHEBI:37565"/>
    </ligand>
</feature>
<feature type="binding site" evidence="1">
    <location>
        <position position="232"/>
    </location>
    <ligand>
        <name>K(+)</name>
        <dbReference type="ChEBI" id="CHEBI:29103"/>
    </ligand>
</feature>
<feature type="binding site" evidence="1">
    <location>
        <position position="236"/>
    </location>
    <ligand>
        <name>Mg(2+)</name>
        <dbReference type="ChEBI" id="CHEBI:18420"/>
    </ligand>
</feature>
<feature type="binding site" evidence="1">
    <location>
        <begin position="251"/>
        <end position="257"/>
    </location>
    <ligand>
        <name>GTP</name>
        <dbReference type="ChEBI" id="CHEBI:37565"/>
    </ligand>
</feature>
<feature type="binding site" evidence="1">
    <location>
        <position position="251"/>
    </location>
    <ligand>
        <name>K(+)</name>
        <dbReference type="ChEBI" id="CHEBI:29103"/>
    </ligand>
</feature>
<feature type="binding site" evidence="1">
    <location>
        <position position="253"/>
    </location>
    <ligand>
        <name>K(+)</name>
        <dbReference type="ChEBI" id="CHEBI:29103"/>
    </ligand>
</feature>
<feature type="binding site" evidence="1">
    <location>
        <position position="256"/>
    </location>
    <ligand>
        <name>K(+)</name>
        <dbReference type="ChEBI" id="CHEBI:29103"/>
    </ligand>
</feature>
<feature type="binding site" evidence="1">
    <location>
        <position position="257"/>
    </location>
    <ligand>
        <name>Mg(2+)</name>
        <dbReference type="ChEBI" id="CHEBI:18420"/>
    </ligand>
</feature>
<feature type="binding site" evidence="1">
    <location>
        <begin position="276"/>
        <end position="279"/>
    </location>
    <ligand>
        <name>GTP</name>
        <dbReference type="ChEBI" id="CHEBI:37565"/>
    </ligand>
</feature>
<feature type="binding site" evidence="1">
    <location>
        <position position="455"/>
    </location>
    <ligand>
        <name>(6S)-5-formyl-5,6,7,8-tetrahydrofolate</name>
        <dbReference type="ChEBI" id="CHEBI:57457"/>
    </ligand>
</feature>
<sequence>MTLTQEFDTIAAISTPLGEGAIAIVRLSGTDALKIAQSVYKGKNLAQVASHTINYGHIFEEERLVDEVMVSVMRAPKTFTREDIVEINTHGGIAVTQEILQLLLRNGARLAEPGEFTKRAFLNGRIDLAQAESVMDLIRAKTDKAANIAVKQLDGSLSKMINNIRQEILESLAQVEVNIDYPEYDDVETMTSQMLLEKTAHFEQLLENLLSTAKRGKILREGLKTAIIGRPNVGKSSLLNQLLREEKAIVTDIAGTTRDVITEFANIGGVPLELVDTAGIRETDDLVEAIGIERSKKALAEADLVLLVLDASLELTDKDLELLELSKNANRIVLLNKTDLPEKLDINQISGDFIRISALKNENLSAVEEKINQIFFAGEIEAKDATVLSNARHISLVEEALKALKEANNGLALGLPVDLIQVDVTRCWQLLGEITGEAAPDELITQLFSQFCLGK</sequence>
<comment type="function">
    <text evidence="1">Exhibits a very high intrinsic GTPase hydrolysis rate. Involved in the addition of a carboxymethylaminomethyl (cmnm) group at the wobble position (U34) of certain tRNAs, forming tRNA-cmnm(5)s(2)U34.</text>
</comment>
<comment type="cofactor">
    <cofactor evidence="1">
        <name>K(+)</name>
        <dbReference type="ChEBI" id="CHEBI:29103"/>
    </cofactor>
    <text evidence="1">Binds 1 potassium ion per subunit.</text>
</comment>
<comment type="subunit">
    <text evidence="1">Homodimer. Heterotetramer of two MnmE and two MnmG subunits.</text>
</comment>
<comment type="subcellular location">
    <subcellularLocation>
        <location evidence="1">Cytoplasm</location>
    </subcellularLocation>
</comment>
<comment type="similarity">
    <text evidence="1">Belongs to the TRAFAC class TrmE-Era-EngA-EngB-Septin-like GTPase superfamily. TrmE GTPase family.</text>
</comment>
<protein>
    <recommendedName>
        <fullName evidence="1">tRNA modification GTPase MnmE</fullName>
        <ecNumber evidence="1">3.6.-.-</ecNumber>
    </recommendedName>
</protein>
<proteinExistence type="inferred from homology"/>
<organism>
    <name type="scientific">Lactococcus lactis subsp. cremoris (strain MG1363)</name>
    <dbReference type="NCBI Taxonomy" id="416870"/>
    <lineage>
        <taxon>Bacteria</taxon>
        <taxon>Bacillati</taxon>
        <taxon>Bacillota</taxon>
        <taxon>Bacilli</taxon>
        <taxon>Lactobacillales</taxon>
        <taxon>Streptococcaceae</taxon>
        <taxon>Lactococcus</taxon>
        <taxon>Lactococcus cremoris subsp. cremoris</taxon>
    </lineage>
</organism>
<name>MNME_LACLM</name>
<accession>A2RP37</accession>
<keyword id="KW-0963">Cytoplasm</keyword>
<keyword id="KW-0342">GTP-binding</keyword>
<keyword id="KW-0378">Hydrolase</keyword>
<keyword id="KW-0460">Magnesium</keyword>
<keyword id="KW-0479">Metal-binding</keyword>
<keyword id="KW-0547">Nucleotide-binding</keyword>
<keyword id="KW-0630">Potassium</keyword>
<keyword id="KW-0819">tRNA processing</keyword>
<evidence type="ECO:0000255" key="1">
    <source>
        <dbReference type="HAMAP-Rule" id="MF_00379"/>
    </source>
</evidence>